<gene>
    <name type="primary">Fam234a</name>
    <name type="synonym">Itfg3</name>
</gene>
<accession>Q5M7W6</accession>
<feature type="chain" id="PRO_0000247995" description="Protein FAM234A">
    <location>
        <begin position="1"/>
        <end position="552"/>
    </location>
</feature>
<feature type="topological domain" description="Cytoplasmic" evidence="1">
    <location>
        <begin position="1"/>
        <end position="49"/>
    </location>
</feature>
<feature type="transmembrane region" description="Helical; Signal-anchor for type II membrane protein" evidence="1">
    <location>
        <begin position="50"/>
        <end position="70"/>
    </location>
</feature>
<feature type="topological domain" description="Extracellular" evidence="1">
    <location>
        <begin position="71"/>
        <end position="552"/>
    </location>
</feature>
<feature type="region of interest" description="Disordered" evidence="2">
    <location>
        <begin position="1"/>
        <end position="40"/>
    </location>
</feature>
<feature type="compositionally biased region" description="Basic and acidic residues" evidence="2">
    <location>
        <begin position="8"/>
        <end position="22"/>
    </location>
</feature>
<feature type="modified residue" description="Phosphoserine" evidence="4">
    <location>
        <position position="21"/>
    </location>
</feature>
<feature type="glycosylation site" description="N-linked (GlcNAc...) asparagine" evidence="1">
    <location>
        <position position="116"/>
    </location>
</feature>
<feature type="glycosylation site" description="N-linked (GlcNAc...) asparagine" evidence="1">
    <location>
        <position position="119"/>
    </location>
</feature>
<feature type="glycosylation site" description="N-linked (GlcNAc...) asparagine" evidence="1">
    <location>
        <position position="314"/>
    </location>
</feature>
<feature type="glycosylation site" description="N-linked (GlcNAc...) asparagine" evidence="1">
    <location>
        <position position="473"/>
    </location>
</feature>
<comment type="subcellular location">
    <subcellularLocation>
        <location evidence="3">Membrane</location>
        <topology evidence="3">Single-pass type II membrane protein</topology>
    </subcellularLocation>
</comment>
<comment type="similarity">
    <text evidence="3">Belongs to the FAM234 family.</text>
</comment>
<proteinExistence type="evidence at protein level"/>
<evidence type="ECO:0000255" key="1"/>
<evidence type="ECO:0000256" key="2">
    <source>
        <dbReference type="SAM" id="MobiDB-lite"/>
    </source>
</evidence>
<evidence type="ECO:0000305" key="3"/>
<evidence type="ECO:0007744" key="4">
    <source>
    </source>
</evidence>
<keyword id="KW-0325">Glycoprotein</keyword>
<keyword id="KW-0472">Membrane</keyword>
<keyword id="KW-0597">Phosphoprotein</keyword>
<keyword id="KW-1185">Reference proteome</keyword>
<keyword id="KW-0735">Signal-anchor</keyword>
<keyword id="KW-0812">Transmembrane</keyword>
<keyword id="KW-1133">Transmembrane helix</keyword>
<reference key="1">
    <citation type="journal article" date="2004" name="Genome Res.">
        <title>The status, quality, and expansion of the NIH full-length cDNA project: the Mammalian Gene Collection (MGC).</title>
        <authorList>
            <consortium name="The MGC Project Team"/>
        </authorList>
    </citation>
    <scope>NUCLEOTIDE SEQUENCE [LARGE SCALE MRNA]</scope>
    <source>
        <strain>Brown Norway</strain>
        <tissue>Kidney</tissue>
    </source>
</reference>
<reference key="2">
    <citation type="journal article" date="2012" name="Nat. Commun.">
        <title>Quantitative maps of protein phosphorylation sites across 14 different rat organs and tissues.</title>
        <authorList>
            <person name="Lundby A."/>
            <person name="Secher A."/>
            <person name="Lage K."/>
            <person name="Nordsborg N.B."/>
            <person name="Dmytriyev A."/>
            <person name="Lundby C."/>
            <person name="Olsen J.V."/>
        </authorList>
    </citation>
    <scope>PHOSPHORYLATION [LARGE SCALE ANALYSIS] AT SER-21</scope>
    <scope>IDENTIFICATION BY MASS SPECTROMETRY [LARGE SCALE ANALYSIS]</scope>
</reference>
<protein>
    <recommendedName>
        <fullName>Protein FAM234A</fullName>
    </recommendedName>
    <alternativeName>
        <fullName>Protein ITFG3</fullName>
    </alternativeName>
</protein>
<dbReference type="EMBL" id="BC088404">
    <property type="protein sequence ID" value="AAH88404.1"/>
    <property type="molecule type" value="mRNA"/>
</dbReference>
<dbReference type="RefSeq" id="NP_001009701.1">
    <property type="nucleotide sequence ID" value="NM_001009701.1"/>
</dbReference>
<dbReference type="RefSeq" id="XP_038942209.1">
    <property type="nucleotide sequence ID" value="XM_039086281.2"/>
</dbReference>
<dbReference type="RefSeq" id="XP_038942210.1">
    <property type="nucleotide sequence ID" value="XM_039086282.2"/>
</dbReference>
<dbReference type="RefSeq" id="XP_038942211.1">
    <property type="nucleotide sequence ID" value="XM_039086283.2"/>
</dbReference>
<dbReference type="RefSeq" id="XP_038942212.1">
    <property type="nucleotide sequence ID" value="XM_039086284.2"/>
</dbReference>
<dbReference type="RefSeq" id="XP_038942213.1">
    <property type="nucleotide sequence ID" value="XM_039086285.2"/>
</dbReference>
<dbReference type="RefSeq" id="XP_038942214.1">
    <property type="nucleotide sequence ID" value="XM_039086286.2"/>
</dbReference>
<dbReference type="RefSeq" id="XP_063125386.1">
    <property type="nucleotide sequence ID" value="XM_063269316.1"/>
</dbReference>
<dbReference type="RefSeq" id="XP_063125387.1">
    <property type="nucleotide sequence ID" value="XM_063269317.1"/>
</dbReference>
<dbReference type="RefSeq" id="XP_063125388.1">
    <property type="nucleotide sequence ID" value="XM_063269318.1"/>
</dbReference>
<dbReference type="FunCoup" id="Q5M7W6">
    <property type="interactions" value="477"/>
</dbReference>
<dbReference type="GlyCosmos" id="Q5M7W6">
    <property type="glycosylation" value="4 sites, No reported glycans"/>
</dbReference>
<dbReference type="GlyGen" id="Q5M7W6">
    <property type="glycosylation" value="4 sites"/>
</dbReference>
<dbReference type="iPTMnet" id="Q5M7W6"/>
<dbReference type="PhosphoSitePlus" id="Q5M7W6"/>
<dbReference type="SwissPalm" id="Q5M7W6"/>
<dbReference type="PaxDb" id="10116-ENSRNOP00000030807"/>
<dbReference type="Ensembl" id="ENSRNOT00000120131.1">
    <property type="protein sequence ID" value="ENSRNOP00000097833.1"/>
    <property type="gene ID" value="ENSRNOG00000067554.1"/>
</dbReference>
<dbReference type="GeneID" id="360502"/>
<dbReference type="KEGG" id="rno:360502"/>
<dbReference type="UCSC" id="RGD:1311484">
    <property type="organism name" value="rat"/>
</dbReference>
<dbReference type="AGR" id="RGD:1311484"/>
<dbReference type="CTD" id="83986"/>
<dbReference type="RGD" id="1311484">
    <property type="gene designation" value="Fam234a"/>
</dbReference>
<dbReference type="eggNOG" id="ENOG502R0CE">
    <property type="taxonomic scope" value="Eukaryota"/>
</dbReference>
<dbReference type="GeneTree" id="ENSGT00530000063694"/>
<dbReference type="InParanoid" id="Q5M7W6"/>
<dbReference type="OMA" id="FMFWGLM"/>
<dbReference type="PhylomeDB" id="Q5M7W6"/>
<dbReference type="TreeFam" id="TF327203"/>
<dbReference type="PRO" id="PR:Q5M7W6"/>
<dbReference type="Proteomes" id="UP000002494">
    <property type="component" value="Chromosome 10"/>
</dbReference>
<dbReference type="GO" id="GO:0009986">
    <property type="term" value="C:cell surface"/>
    <property type="evidence" value="ECO:0000266"/>
    <property type="project" value="RGD"/>
</dbReference>
<dbReference type="GO" id="GO:0016020">
    <property type="term" value="C:membrane"/>
    <property type="evidence" value="ECO:0007669"/>
    <property type="project" value="UniProtKB-SubCell"/>
</dbReference>
<dbReference type="InterPro" id="IPR045232">
    <property type="entry name" value="FAM234"/>
</dbReference>
<dbReference type="InterPro" id="IPR055409">
    <property type="entry name" value="FAM234A_B_beta-prop"/>
</dbReference>
<dbReference type="InterPro" id="IPR011047">
    <property type="entry name" value="Quinoprotein_ADH-like_sf"/>
</dbReference>
<dbReference type="PANTHER" id="PTHR21419">
    <property type="match status" value="1"/>
</dbReference>
<dbReference type="PANTHER" id="PTHR21419:SF7">
    <property type="entry name" value="PROTEIN FAM234A"/>
    <property type="match status" value="1"/>
</dbReference>
<dbReference type="Pfam" id="PF23727">
    <property type="entry name" value="Beta-prop_FAM234A_B"/>
    <property type="match status" value="1"/>
</dbReference>
<dbReference type="SUPFAM" id="SSF50998">
    <property type="entry name" value="Quinoprotein alcohol dehydrogenase-like"/>
    <property type="match status" value="1"/>
</dbReference>
<name>F234A_RAT</name>
<organism>
    <name type="scientific">Rattus norvegicus</name>
    <name type="common">Rat</name>
    <dbReference type="NCBI Taxonomy" id="10116"/>
    <lineage>
        <taxon>Eukaryota</taxon>
        <taxon>Metazoa</taxon>
        <taxon>Chordata</taxon>
        <taxon>Craniata</taxon>
        <taxon>Vertebrata</taxon>
        <taxon>Euteleostomi</taxon>
        <taxon>Mammalia</taxon>
        <taxon>Eutheria</taxon>
        <taxon>Euarchontoglires</taxon>
        <taxon>Glires</taxon>
        <taxon>Rodentia</taxon>
        <taxon>Myomorpha</taxon>
        <taxon>Muroidea</taxon>
        <taxon>Muridae</taxon>
        <taxon>Murinae</taxon>
        <taxon>Rattus</taxon>
    </lineage>
</organism>
<sequence>MMDDKDLEAEIHPLKNEDKKSQENLGNLPKTEDNLKNKPVPSRLSRCRTVAFFLSLFICLFVVFVLSFIIPCPDRPSSEDKWRLDYDYAVTYDFLALGDVDRDEVQDVLFLYKNTNSSNNSTRSCADEGFSTPCTFMAAVSGTNGTVLWERPLAQDVAHVKCAVPQTRDSKVSSACVLVGRLGSFMAVNFFTGETLWSHPRSFSGNASILSPLLQVPDIDGDGAPDLLMLSREGQEVSGALYSGSTGYQIGHRGSLGVDGDGVALLHVTRTGAQYILLPCASALCGVSVKGLYKRITGRDDHFKEDPSWENMLNRSAHRRLLHSSGAVRYLMNVPGKTGQDLLLVSSEDCKLLDGQDLVPRWTLGATQVLRKPILGHYKPDTLAVVIENGTSLDRQILLLDLSTGSMLWSQPLPSLPGAPPSTSLMTADHRSAFFFWGLHDPVSANEMDPQDTQHSLYMFHPTLPGILLELANVSANIVAFDAVLFEPSRHAAYVLLTGPASSDVPGLVSLTKHRVRDLVPGSRVIHLSEGSSDSDQAIRDRFSRLRYRSEV</sequence>